<keyword id="KW-0066">ATP synthesis</keyword>
<keyword id="KW-1003">Cell membrane</keyword>
<keyword id="KW-0138">CF(0)</keyword>
<keyword id="KW-0375">Hydrogen ion transport</keyword>
<keyword id="KW-0406">Ion transport</keyword>
<keyword id="KW-0472">Membrane</keyword>
<keyword id="KW-0812">Transmembrane</keyword>
<keyword id="KW-1133">Transmembrane helix</keyword>
<keyword id="KW-0813">Transport</keyword>
<proteinExistence type="inferred from homology"/>
<dbReference type="EMBL" id="AF059739">
    <property type="protein sequence ID" value="AAF02204.1"/>
    <property type="molecule type" value="Genomic_DNA"/>
</dbReference>
<dbReference type="EMBL" id="AM406671">
    <property type="protein sequence ID" value="CAL98518.1"/>
    <property type="molecule type" value="Genomic_DNA"/>
</dbReference>
<dbReference type="RefSeq" id="WP_010906128.1">
    <property type="nucleotide sequence ID" value="NZ_WJVF01000007.1"/>
</dbReference>
<dbReference type="SMR" id="P0A2Z1"/>
<dbReference type="STRING" id="416870.llmg_1950"/>
<dbReference type="GeneID" id="89633969"/>
<dbReference type="KEGG" id="llm:llmg_1950"/>
<dbReference type="eggNOG" id="COG0711">
    <property type="taxonomic scope" value="Bacteria"/>
</dbReference>
<dbReference type="HOGENOM" id="CLU_079215_4_2_9"/>
<dbReference type="OrthoDB" id="282095at2"/>
<dbReference type="PhylomeDB" id="P0A2Z1"/>
<dbReference type="Proteomes" id="UP000000364">
    <property type="component" value="Chromosome"/>
</dbReference>
<dbReference type="GO" id="GO:0005886">
    <property type="term" value="C:plasma membrane"/>
    <property type="evidence" value="ECO:0007669"/>
    <property type="project" value="UniProtKB-SubCell"/>
</dbReference>
<dbReference type="GO" id="GO:0045259">
    <property type="term" value="C:proton-transporting ATP synthase complex"/>
    <property type="evidence" value="ECO:0007669"/>
    <property type="project" value="UniProtKB-KW"/>
</dbReference>
<dbReference type="GO" id="GO:0046933">
    <property type="term" value="F:proton-transporting ATP synthase activity, rotational mechanism"/>
    <property type="evidence" value="ECO:0007669"/>
    <property type="project" value="UniProtKB-UniRule"/>
</dbReference>
<dbReference type="GO" id="GO:0046961">
    <property type="term" value="F:proton-transporting ATPase activity, rotational mechanism"/>
    <property type="evidence" value="ECO:0007669"/>
    <property type="project" value="TreeGrafter"/>
</dbReference>
<dbReference type="CDD" id="cd06503">
    <property type="entry name" value="ATP-synt_Fo_b"/>
    <property type="match status" value="1"/>
</dbReference>
<dbReference type="Gene3D" id="1.20.5.620">
    <property type="entry name" value="F1F0 ATP synthase subunit B, membrane domain"/>
    <property type="match status" value="1"/>
</dbReference>
<dbReference type="HAMAP" id="MF_01398">
    <property type="entry name" value="ATP_synth_b_bprime"/>
    <property type="match status" value="1"/>
</dbReference>
<dbReference type="InterPro" id="IPR028987">
    <property type="entry name" value="ATP_synth_B-like_membr_sf"/>
</dbReference>
<dbReference type="InterPro" id="IPR002146">
    <property type="entry name" value="ATP_synth_b/b'su_bac/chlpt"/>
</dbReference>
<dbReference type="InterPro" id="IPR005864">
    <property type="entry name" value="ATP_synth_F0_bsu_bac"/>
</dbReference>
<dbReference type="InterPro" id="IPR050059">
    <property type="entry name" value="ATP_synthase_B_chain"/>
</dbReference>
<dbReference type="NCBIfam" id="TIGR01144">
    <property type="entry name" value="ATP_synt_b"/>
    <property type="match status" value="1"/>
</dbReference>
<dbReference type="PANTHER" id="PTHR33445:SF1">
    <property type="entry name" value="ATP SYNTHASE SUBUNIT B"/>
    <property type="match status" value="1"/>
</dbReference>
<dbReference type="PANTHER" id="PTHR33445">
    <property type="entry name" value="ATP SYNTHASE SUBUNIT B', CHLOROPLASTIC"/>
    <property type="match status" value="1"/>
</dbReference>
<dbReference type="Pfam" id="PF00430">
    <property type="entry name" value="ATP-synt_B"/>
    <property type="match status" value="1"/>
</dbReference>
<dbReference type="SUPFAM" id="SSF81573">
    <property type="entry name" value="F1F0 ATP synthase subunit B, membrane domain"/>
    <property type="match status" value="1"/>
</dbReference>
<reference key="1">
    <citation type="journal article" date="2000" name="J. Bacteriol.">
        <title>The membrane bound H+-ATPase complex is essential for growth of Lactococcus lactis.</title>
        <authorList>
            <person name="Koebmann B.J."/>
            <person name="Nilsson D."/>
            <person name="Kuipers O.P."/>
            <person name="Jensen P.R."/>
        </authorList>
    </citation>
    <scope>NUCLEOTIDE SEQUENCE [GENOMIC DNA]</scope>
</reference>
<reference key="2">
    <citation type="journal article" date="2007" name="J. Bacteriol.">
        <title>The complete genome sequence of the lactic acid bacterial paradigm Lactococcus lactis subsp. cremoris MG1363.</title>
        <authorList>
            <person name="Wegmann U."/>
            <person name="O'Connell-Motherway M."/>
            <person name="Zomer A."/>
            <person name="Buist G."/>
            <person name="Shearman C."/>
            <person name="Canchaya C."/>
            <person name="Ventura M."/>
            <person name="Goesmann A."/>
            <person name="Gasson M.J."/>
            <person name="Kuipers O.P."/>
            <person name="van Sinderen D."/>
            <person name="Kok J."/>
        </authorList>
    </citation>
    <scope>NUCLEOTIDE SEQUENCE [LARGE SCALE GENOMIC DNA]</scope>
    <source>
        <strain>MG1363</strain>
    </source>
</reference>
<gene>
    <name evidence="1" type="primary">atpF</name>
    <name type="ordered locus">llmg_1950</name>
</gene>
<protein>
    <recommendedName>
        <fullName evidence="1">ATP synthase subunit b</fullName>
    </recommendedName>
    <alternativeName>
        <fullName evidence="1">ATP synthase F(0) sector subunit b</fullName>
    </alternativeName>
    <alternativeName>
        <fullName evidence="1">ATPase subunit I</fullName>
    </alternativeName>
    <alternativeName>
        <fullName evidence="1">F-type ATPase subunit b</fullName>
        <shortName evidence="1">F-ATPase subunit b</shortName>
    </alternativeName>
</protein>
<sequence>MSTLLLEAAPNTVLGNIIVVSGAFIILLVLLRLFAWNAITSVFASRAKKISDDIDAAEANNKQAADLVKQRQAELAGSKEEAANIIQVANDTASQNRAKVLATANEEATSLKKRAQEDIEQERKEALNTVKGDVADISVQIAEKLIGQSLDASAQQELIDSYLAKLGE</sequence>
<feature type="chain" id="PRO_0000082379" description="ATP synthase subunit b">
    <location>
        <begin position="1"/>
        <end position="168"/>
    </location>
</feature>
<feature type="transmembrane region" description="Helical" evidence="1">
    <location>
        <begin position="11"/>
        <end position="31"/>
    </location>
</feature>
<accession>P0A2Z1</accession>
<accession>A2RMI6</accession>
<accession>Q9RAU4</accession>
<name>ATPF_LACLM</name>
<organism>
    <name type="scientific">Lactococcus lactis subsp. cremoris (strain MG1363)</name>
    <dbReference type="NCBI Taxonomy" id="416870"/>
    <lineage>
        <taxon>Bacteria</taxon>
        <taxon>Bacillati</taxon>
        <taxon>Bacillota</taxon>
        <taxon>Bacilli</taxon>
        <taxon>Lactobacillales</taxon>
        <taxon>Streptococcaceae</taxon>
        <taxon>Lactococcus</taxon>
        <taxon>Lactococcus cremoris subsp. cremoris</taxon>
    </lineage>
</organism>
<evidence type="ECO:0000255" key="1">
    <source>
        <dbReference type="HAMAP-Rule" id="MF_01398"/>
    </source>
</evidence>
<comment type="function">
    <text evidence="1">F(1)F(0) ATP synthase produces ATP from ADP in the presence of a proton or sodium gradient. F-type ATPases consist of two structural domains, F(1) containing the extramembraneous catalytic core and F(0) containing the membrane proton channel, linked together by a central stalk and a peripheral stalk. During catalysis, ATP synthesis in the catalytic domain of F(1) is coupled via a rotary mechanism of the central stalk subunits to proton translocation.</text>
</comment>
<comment type="function">
    <text evidence="1">Component of the F(0) channel, it forms part of the peripheral stalk, linking F(1) to F(0).</text>
</comment>
<comment type="subunit">
    <text evidence="1">F-type ATPases have 2 components, F(1) - the catalytic core - and F(0) - the membrane proton channel. F(1) has five subunits: alpha(3), beta(3), gamma(1), delta(1), epsilon(1). F(0) has three main subunits: a(1), b(2) and c(10-14). The alpha and beta chains form an alternating ring which encloses part of the gamma chain. F(1) is attached to F(0) by a central stalk formed by the gamma and epsilon chains, while a peripheral stalk is formed by the delta and b chains.</text>
</comment>
<comment type="subcellular location">
    <subcellularLocation>
        <location evidence="1">Cell membrane</location>
        <topology evidence="1">Single-pass membrane protein</topology>
    </subcellularLocation>
</comment>
<comment type="similarity">
    <text evidence="1">Belongs to the ATPase B chain family.</text>
</comment>